<feature type="chain" id="PRO_0000203258" description="Uncharacterized protein YML037C">
    <location>
        <begin position="1"/>
        <end position="340"/>
    </location>
</feature>
<feature type="region of interest" description="Disordered" evidence="1">
    <location>
        <begin position="193"/>
        <end position="340"/>
    </location>
</feature>
<feature type="compositionally biased region" description="Basic and acidic residues" evidence="1">
    <location>
        <begin position="193"/>
        <end position="207"/>
    </location>
</feature>
<feature type="compositionally biased region" description="Low complexity" evidence="1">
    <location>
        <begin position="217"/>
        <end position="228"/>
    </location>
</feature>
<feature type="compositionally biased region" description="Basic and acidic residues" evidence="1">
    <location>
        <begin position="235"/>
        <end position="244"/>
    </location>
</feature>
<feature type="compositionally biased region" description="Polar residues" evidence="1">
    <location>
        <begin position="263"/>
        <end position="279"/>
    </location>
</feature>
<feature type="compositionally biased region" description="Polar residues" evidence="1">
    <location>
        <begin position="307"/>
        <end position="328"/>
    </location>
</feature>
<dbReference type="EMBL" id="Z46659">
    <property type="protein sequence ID" value="CAA86618.1"/>
    <property type="molecule type" value="Genomic_DNA"/>
</dbReference>
<dbReference type="EMBL" id="AY557990">
    <property type="protein sequence ID" value="AAS56316.1"/>
    <property type="molecule type" value="Genomic_DNA"/>
</dbReference>
<dbReference type="EMBL" id="BK006946">
    <property type="protein sequence ID" value="DAA09862.1"/>
    <property type="molecule type" value="Genomic_DNA"/>
</dbReference>
<dbReference type="PIR" id="S49742">
    <property type="entry name" value="S49742"/>
</dbReference>
<dbReference type="BioGRID" id="35133">
    <property type="interactions" value="94"/>
</dbReference>
<dbReference type="DIP" id="DIP-4353N"/>
<dbReference type="FunCoup" id="Q03703">
    <property type="interactions" value="34"/>
</dbReference>
<dbReference type="IntAct" id="Q03703">
    <property type="interactions" value="1"/>
</dbReference>
<dbReference type="GlyGen" id="Q03703">
    <property type="glycosylation" value="1 site"/>
</dbReference>
<dbReference type="iPTMnet" id="Q03703"/>
<dbReference type="PaxDb" id="4932-YML037C"/>
<dbReference type="PeptideAtlas" id="Q03703"/>
<dbReference type="EnsemblFungi" id="YML037C_mRNA">
    <property type="protein sequence ID" value="YML037C"/>
    <property type="gene ID" value="YML037C"/>
</dbReference>
<dbReference type="KEGG" id="sce:YML037C"/>
<dbReference type="AGR" id="SGD:S000004501"/>
<dbReference type="SGD" id="S000004501">
    <property type="gene designation" value="YML037C"/>
</dbReference>
<dbReference type="VEuPathDB" id="FungiDB:YML037C"/>
<dbReference type="eggNOG" id="ENOG502S748">
    <property type="taxonomic scope" value="Eukaryota"/>
</dbReference>
<dbReference type="HOGENOM" id="CLU_048593_0_0_1"/>
<dbReference type="InParanoid" id="Q03703"/>
<dbReference type="OMA" id="DQWITEE"/>
<dbReference type="OrthoDB" id="4036613at2759"/>
<dbReference type="BioCyc" id="YEAST:G3O-32636-MONOMER"/>
<dbReference type="BioGRID-ORCS" id="854971">
    <property type="hits" value="1 hit in 10 CRISPR screens"/>
</dbReference>
<dbReference type="PRO" id="PR:Q03703"/>
<dbReference type="Proteomes" id="UP000002311">
    <property type="component" value="Chromosome XIII"/>
</dbReference>
<dbReference type="RNAct" id="Q03703">
    <property type="molecule type" value="protein"/>
</dbReference>
<dbReference type="GO" id="GO:0030136">
    <property type="term" value="C:clathrin-coated vesicle"/>
    <property type="evidence" value="ECO:0007005"/>
    <property type="project" value="SGD"/>
</dbReference>
<comment type="miscellaneous">
    <text evidence="2">Present with 815 molecules/cell in log phase SD medium.</text>
</comment>
<protein>
    <recommendedName>
        <fullName>Uncharacterized protein YML037C</fullName>
    </recommendedName>
</protein>
<gene>
    <name type="ordered locus">YML037C</name>
</gene>
<keyword id="KW-1185">Reference proteome</keyword>
<sequence>MDENKIIDQLFSKEYTPQDDSEQAKNGDVSLYGLLDEVANGRRLMNCLFHSPMQMGNKLSTDKLDGKCRQIQRDWIDEEKTITMNSGALQLDGPVLFSWSHNVAPTSHQETINTTFKQGSPSRGSNKPKITTTSQLFDRASAEIDKCIKPNSKSWMVEERFERNEAHTADGKKPSTWANSDFKVDPLQKFVVKELPKEKKKSDGDKTKKNKSKRKSFFGFWGHSGSKSGSKKKSEKPIEAKNEIQDEVSQKSGLSPDDDTTFSDKNTIQSKQESMSDQQAEPKVHEPAVTNTGCSEHDDGDGFEQVPAQSSYHPSSEPSIASTPSLTLDSFIPLQPKKKI</sequence>
<reference key="1">
    <citation type="journal article" date="1997" name="Nature">
        <title>The nucleotide sequence of Saccharomyces cerevisiae chromosome XIII.</title>
        <authorList>
            <person name="Bowman S."/>
            <person name="Churcher C.M."/>
            <person name="Badcock K."/>
            <person name="Brown D."/>
            <person name="Chillingworth T."/>
            <person name="Connor R."/>
            <person name="Dedman K."/>
            <person name="Devlin K."/>
            <person name="Gentles S."/>
            <person name="Hamlin N."/>
            <person name="Hunt S."/>
            <person name="Jagels K."/>
            <person name="Lye G."/>
            <person name="Moule S."/>
            <person name="Odell C."/>
            <person name="Pearson D."/>
            <person name="Rajandream M.A."/>
            <person name="Rice P."/>
            <person name="Skelton J."/>
            <person name="Walsh S.V."/>
            <person name="Whitehead S."/>
            <person name="Barrell B.G."/>
        </authorList>
    </citation>
    <scope>NUCLEOTIDE SEQUENCE [LARGE SCALE GENOMIC DNA]</scope>
    <source>
        <strain>ATCC 204508 / S288c</strain>
    </source>
</reference>
<reference key="2">
    <citation type="journal article" date="2014" name="G3 (Bethesda)">
        <title>The reference genome sequence of Saccharomyces cerevisiae: Then and now.</title>
        <authorList>
            <person name="Engel S.R."/>
            <person name="Dietrich F.S."/>
            <person name="Fisk D.G."/>
            <person name="Binkley G."/>
            <person name="Balakrishnan R."/>
            <person name="Costanzo M.C."/>
            <person name="Dwight S.S."/>
            <person name="Hitz B.C."/>
            <person name="Karra K."/>
            <person name="Nash R.S."/>
            <person name="Weng S."/>
            <person name="Wong E.D."/>
            <person name="Lloyd P."/>
            <person name="Skrzypek M.S."/>
            <person name="Miyasato S.R."/>
            <person name="Simison M."/>
            <person name="Cherry J.M."/>
        </authorList>
    </citation>
    <scope>GENOME REANNOTATION</scope>
    <source>
        <strain>ATCC 204508 / S288c</strain>
    </source>
</reference>
<reference key="3">
    <citation type="journal article" date="2007" name="Genome Res.">
        <title>Approaching a complete repository of sequence-verified protein-encoding clones for Saccharomyces cerevisiae.</title>
        <authorList>
            <person name="Hu Y."/>
            <person name="Rolfs A."/>
            <person name="Bhullar B."/>
            <person name="Murthy T.V.S."/>
            <person name="Zhu C."/>
            <person name="Berger M.F."/>
            <person name="Camargo A.A."/>
            <person name="Kelley F."/>
            <person name="McCarron S."/>
            <person name="Jepson D."/>
            <person name="Richardson A."/>
            <person name="Raphael J."/>
            <person name="Moreira D."/>
            <person name="Taycher E."/>
            <person name="Zuo D."/>
            <person name="Mohr S."/>
            <person name="Kane M.F."/>
            <person name="Williamson J."/>
            <person name="Simpson A.J.G."/>
            <person name="Bulyk M.L."/>
            <person name="Harlow E."/>
            <person name="Marsischky G."/>
            <person name="Kolodner R.D."/>
            <person name="LaBaer J."/>
        </authorList>
    </citation>
    <scope>NUCLEOTIDE SEQUENCE [GENOMIC DNA]</scope>
    <source>
        <strain>ATCC 204508 / S288c</strain>
    </source>
</reference>
<reference key="4">
    <citation type="journal article" date="2003" name="Nature">
        <title>Global analysis of protein expression in yeast.</title>
        <authorList>
            <person name="Ghaemmaghami S."/>
            <person name="Huh W.-K."/>
            <person name="Bower K."/>
            <person name="Howson R.W."/>
            <person name="Belle A."/>
            <person name="Dephoure N."/>
            <person name="O'Shea E.K."/>
            <person name="Weissman J.S."/>
        </authorList>
    </citation>
    <scope>LEVEL OF PROTEIN EXPRESSION [LARGE SCALE ANALYSIS]</scope>
</reference>
<proteinExistence type="evidence at protein level"/>
<accession>Q03703</accession>
<accession>D6VZD8</accession>
<organism>
    <name type="scientific">Saccharomyces cerevisiae (strain ATCC 204508 / S288c)</name>
    <name type="common">Baker's yeast</name>
    <dbReference type="NCBI Taxonomy" id="559292"/>
    <lineage>
        <taxon>Eukaryota</taxon>
        <taxon>Fungi</taxon>
        <taxon>Dikarya</taxon>
        <taxon>Ascomycota</taxon>
        <taxon>Saccharomycotina</taxon>
        <taxon>Saccharomycetes</taxon>
        <taxon>Saccharomycetales</taxon>
        <taxon>Saccharomycetaceae</taxon>
        <taxon>Saccharomyces</taxon>
    </lineage>
</organism>
<evidence type="ECO:0000256" key="1">
    <source>
        <dbReference type="SAM" id="MobiDB-lite"/>
    </source>
</evidence>
<evidence type="ECO:0000269" key="2">
    <source>
    </source>
</evidence>
<name>YMD7_YEAST</name>